<proteinExistence type="inferred from homology"/>
<gene>
    <name type="primary">coaA</name>
    <name type="synonym">yqjS</name>
    <name type="ordered locus">BSU23760</name>
</gene>
<name>COAA_BACSU</name>
<dbReference type="EC" id="2.7.1.33"/>
<dbReference type="EMBL" id="D84432">
    <property type="protein sequence ID" value="BAA12625.1"/>
    <property type="status" value="ALT_INIT"/>
    <property type="molecule type" value="Genomic_DNA"/>
</dbReference>
<dbReference type="EMBL" id="AL009126">
    <property type="protein sequence ID" value="CAB14308.2"/>
    <property type="molecule type" value="Genomic_DNA"/>
</dbReference>
<dbReference type="RefSeq" id="NP_390257.2">
    <property type="nucleotide sequence ID" value="NC_000964.3"/>
</dbReference>
<dbReference type="RefSeq" id="WP_003245966.1">
    <property type="nucleotide sequence ID" value="NZ_OZ025638.1"/>
</dbReference>
<dbReference type="SMR" id="P54556"/>
<dbReference type="FunCoup" id="P54556">
    <property type="interactions" value="378"/>
</dbReference>
<dbReference type="STRING" id="224308.BSU23760"/>
<dbReference type="PaxDb" id="224308-BSU23760"/>
<dbReference type="EnsemblBacteria" id="CAB14308">
    <property type="protein sequence ID" value="CAB14308"/>
    <property type="gene ID" value="BSU_23760"/>
</dbReference>
<dbReference type="GeneID" id="86873081"/>
<dbReference type="GeneID" id="938704"/>
<dbReference type="KEGG" id="bsu:BSU23760"/>
<dbReference type="PATRIC" id="fig|224308.179.peg.2589"/>
<dbReference type="eggNOG" id="COG1072">
    <property type="taxonomic scope" value="Bacteria"/>
</dbReference>
<dbReference type="InParanoid" id="P54556"/>
<dbReference type="OrthoDB" id="1550976at2"/>
<dbReference type="PhylomeDB" id="P54556"/>
<dbReference type="BioCyc" id="BSUB:BSU23760-MONOMER"/>
<dbReference type="UniPathway" id="UPA00241">
    <property type="reaction ID" value="UER00352"/>
</dbReference>
<dbReference type="Proteomes" id="UP000001570">
    <property type="component" value="Chromosome"/>
</dbReference>
<dbReference type="GO" id="GO:0005737">
    <property type="term" value="C:cytoplasm"/>
    <property type="evidence" value="ECO:0000318"/>
    <property type="project" value="GO_Central"/>
</dbReference>
<dbReference type="GO" id="GO:0005524">
    <property type="term" value="F:ATP binding"/>
    <property type="evidence" value="ECO:0007669"/>
    <property type="project" value="UniProtKB-UniRule"/>
</dbReference>
<dbReference type="GO" id="GO:0004594">
    <property type="term" value="F:pantothenate kinase activity"/>
    <property type="evidence" value="ECO:0000318"/>
    <property type="project" value="GO_Central"/>
</dbReference>
<dbReference type="GO" id="GO:0015937">
    <property type="term" value="P:coenzyme A biosynthetic process"/>
    <property type="evidence" value="ECO:0000318"/>
    <property type="project" value="GO_Central"/>
</dbReference>
<dbReference type="CDD" id="cd02025">
    <property type="entry name" value="PanK"/>
    <property type="match status" value="1"/>
</dbReference>
<dbReference type="FunFam" id="3.40.50.300:FF:002006">
    <property type="entry name" value="Pantothenate kinase"/>
    <property type="match status" value="1"/>
</dbReference>
<dbReference type="Gene3D" id="3.40.50.300">
    <property type="entry name" value="P-loop containing nucleotide triphosphate hydrolases"/>
    <property type="match status" value="1"/>
</dbReference>
<dbReference type="HAMAP" id="MF_00215">
    <property type="entry name" value="Pantothen_kinase_1"/>
    <property type="match status" value="1"/>
</dbReference>
<dbReference type="InterPro" id="IPR027417">
    <property type="entry name" value="P-loop_NTPase"/>
</dbReference>
<dbReference type="InterPro" id="IPR004566">
    <property type="entry name" value="PanK"/>
</dbReference>
<dbReference type="InterPro" id="IPR006083">
    <property type="entry name" value="PRK/URK"/>
</dbReference>
<dbReference type="NCBIfam" id="TIGR00554">
    <property type="entry name" value="panK_bact"/>
    <property type="match status" value="1"/>
</dbReference>
<dbReference type="PANTHER" id="PTHR10285">
    <property type="entry name" value="URIDINE KINASE"/>
    <property type="match status" value="1"/>
</dbReference>
<dbReference type="Pfam" id="PF00485">
    <property type="entry name" value="PRK"/>
    <property type="match status" value="1"/>
</dbReference>
<dbReference type="PIRSF" id="PIRSF000545">
    <property type="entry name" value="Pantothenate_kin"/>
    <property type="match status" value="1"/>
</dbReference>
<dbReference type="SUPFAM" id="SSF52540">
    <property type="entry name" value="P-loop containing nucleoside triphosphate hydrolases"/>
    <property type="match status" value="1"/>
</dbReference>
<organism>
    <name type="scientific">Bacillus subtilis (strain 168)</name>
    <dbReference type="NCBI Taxonomy" id="224308"/>
    <lineage>
        <taxon>Bacteria</taxon>
        <taxon>Bacillati</taxon>
        <taxon>Bacillota</taxon>
        <taxon>Bacilli</taxon>
        <taxon>Bacillales</taxon>
        <taxon>Bacillaceae</taxon>
        <taxon>Bacillus</taxon>
    </lineage>
</organism>
<evidence type="ECO:0000250" key="1"/>
<evidence type="ECO:0000255" key="2"/>
<evidence type="ECO:0000305" key="3"/>
<reference key="1">
    <citation type="journal article" date="1996" name="Microbiology">
        <title>Systematic sequencing of the 283 kb 210 degrees-232 degrees region of the Bacillus subtilis genome containing the skin element and many sporulation genes.</title>
        <authorList>
            <person name="Mizuno M."/>
            <person name="Masuda S."/>
            <person name="Takemaru K."/>
            <person name="Hosono S."/>
            <person name="Sato T."/>
            <person name="Takeuchi M."/>
            <person name="Kobayashi Y."/>
        </authorList>
    </citation>
    <scope>NUCLEOTIDE SEQUENCE [GENOMIC DNA]</scope>
    <source>
        <strain>168 / JH642</strain>
    </source>
</reference>
<reference key="2">
    <citation type="journal article" date="1997" name="Nature">
        <title>The complete genome sequence of the Gram-positive bacterium Bacillus subtilis.</title>
        <authorList>
            <person name="Kunst F."/>
            <person name="Ogasawara N."/>
            <person name="Moszer I."/>
            <person name="Albertini A.M."/>
            <person name="Alloni G."/>
            <person name="Azevedo V."/>
            <person name="Bertero M.G."/>
            <person name="Bessieres P."/>
            <person name="Bolotin A."/>
            <person name="Borchert S."/>
            <person name="Borriss R."/>
            <person name="Boursier L."/>
            <person name="Brans A."/>
            <person name="Braun M."/>
            <person name="Brignell S.C."/>
            <person name="Bron S."/>
            <person name="Brouillet S."/>
            <person name="Bruschi C.V."/>
            <person name="Caldwell B."/>
            <person name="Capuano V."/>
            <person name="Carter N.M."/>
            <person name="Choi S.-K."/>
            <person name="Codani J.-J."/>
            <person name="Connerton I.F."/>
            <person name="Cummings N.J."/>
            <person name="Daniel R.A."/>
            <person name="Denizot F."/>
            <person name="Devine K.M."/>
            <person name="Duesterhoeft A."/>
            <person name="Ehrlich S.D."/>
            <person name="Emmerson P.T."/>
            <person name="Entian K.-D."/>
            <person name="Errington J."/>
            <person name="Fabret C."/>
            <person name="Ferrari E."/>
            <person name="Foulger D."/>
            <person name="Fritz C."/>
            <person name="Fujita M."/>
            <person name="Fujita Y."/>
            <person name="Fuma S."/>
            <person name="Galizzi A."/>
            <person name="Galleron N."/>
            <person name="Ghim S.-Y."/>
            <person name="Glaser P."/>
            <person name="Goffeau A."/>
            <person name="Golightly E.J."/>
            <person name="Grandi G."/>
            <person name="Guiseppi G."/>
            <person name="Guy B.J."/>
            <person name="Haga K."/>
            <person name="Haiech J."/>
            <person name="Harwood C.R."/>
            <person name="Henaut A."/>
            <person name="Hilbert H."/>
            <person name="Holsappel S."/>
            <person name="Hosono S."/>
            <person name="Hullo M.-F."/>
            <person name="Itaya M."/>
            <person name="Jones L.-M."/>
            <person name="Joris B."/>
            <person name="Karamata D."/>
            <person name="Kasahara Y."/>
            <person name="Klaerr-Blanchard M."/>
            <person name="Klein C."/>
            <person name="Kobayashi Y."/>
            <person name="Koetter P."/>
            <person name="Koningstein G."/>
            <person name="Krogh S."/>
            <person name="Kumano M."/>
            <person name="Kurita K."/>
            <person name="Lapidus A."/>
            <person name="Lardinois S."/>
            <person name="Lauber J."/>
            <person name="Lazarevic V."/>
            <person name="Lee S.-M."/>
            <person name="Levine A."/>
            <person name="Liu H."/>
            <person name="Masuda S."/>
            <person name="Mauel C."/>
            <person name="Medigue C."/>
            <person name="Medina N."/>
            <person name="Mellado R.P."/>
            <person name="Mizuno M."/>
            <person name="Moestl D."/>
            <person name="Nakai S."/>
            <person name="Noback M."/>
            <person name="Noone D."/>
            <person name="O'Reilly M."/>
            <person name="Ogawa K."/>
            <person name="Ogiwara A."/>
            <person name="Oudega B."/>
            <person name="Park S.-H."/>
            <person name="Parro V."/>
            <person name="Pohl T.M."/>
            <person name="Portetelle D."/>
            <person name="Porwollik S."/>
            <person name="Prescott A.M."/>
            <person name="Presecan E."/>
            <person name="Pujic P."/>
            <person name="Purnelle B."/>
            <person name="Rapoport G."/>
            <person name="Rey M."/>
            <person name="Reynolds S."/>
            <person name="Rieger M."/>
            <person name="Rivolta C."/>
            <person name="Rocha E."/>
            <person name="Roche B."/>
            <person name="Rose M."/>
            <person name="Sadaie Y."/>
            <person name="Sato T."/>
            <person name="Scanlan E."/>
            <person name="Schleich S."/>
            <person name="Schroeter R."/>
            <person name="Scoffone F."/>
            <person name="Sekiguchi J."/>
            <person name="Sekowska A."/>
            <person name="Seror S.J."/>
            <person name="Serror P."/>
            <person name="Shin B.-S."/>
            <person name="Soldo B."/>
            <person name="Sorokin A."/>
            <person name="Tacconi E."/>
            <person name="Takagi T."/>
            <person name="Takahashi H."/>
            <person name="Takemaru K."/>
            <person name="Takeuchi M."/>
            <person name="Tamakoshi A."/>
            <person name="Tanaka T."/>
            <person name="Terpstra P."/>
            <person name="Tognoni A."/>
            <person name="Tosato V."/>
            <person name="Uchiyama S."/>
            <person name="Vandenbol M."/>
            <person name="Vannier F."/>
            <person name="Vassarotti A."/>
            <person name="Viari A."/>
            <person name="Wambutt R."/>
            <person name="Wedler E."/>
            <person name="Wedler H."/>
            <person name="Weitzenegger T."/>
            <person name="Winters P."/>
            <person name="Wipat A."/>
            <person name="Yamamoto H."/>
            <person name="Yamane K."/>
            <person name="Yasumoto K."/>
            <person name="Yata K."/>
            <person name="Yoshida K."/>
            <person name="Yoshikawa H.-F."/>
            <person name="Zumstein E."/>
            <person name="Yoshikawa H."/>
            <person name="Danchin A."/>
        </authorList>
    </citation>
    <scope>NUCLEOTIDE SEQUENCE [LARGE SCALE GENOMIC DNA]</scope>
    <source>
        <strain>168</strain>
    </source>
</reference>
<accession>P54556</accession>
<protein>
    <recommendedName>
        <fullName>Pantothenate kinase</fullName>
        <ecNumber>2.7.1.33</ecNumber>
    </recommendedName>
    <alternativeName>
        <fullName>Pantothenic acid kinase</fullName>
    </alternativeName>
</protein>
<feature type="chain" id="PRO_0000194419" description="Pantothenate kinase">
    <location>
        <begin position="1"/>
        <end position="319"/>
    </location>
</feature>
<feature type="binding site" evidence="2">
    <location>
        <begin position="96"/>
        <end position="103"/>
    </location>
    <ligand>
        <name>ATP</name>
        <dbReference type="ChEBI" id="CHEBI:30616"/>
    </ligand>
</feature>
<keyword id="KW-0067">ATP-binding</keyword>
<keyword id="KW-0173">Coenzyme A biosynthesis</keyword>
<keyword id="KW-0963">Cytoplasm</keyword>
<keyword id="KW-0418">Kinase</keyword>
<keyword id="KW-0547">Nucleotide-binding</keyword>
<keyword id="KW-1185">Reference proteome</keyword>
<keyword id="KW-0808">Transferase</keyword>
<comment type="catalytic activity">
    <reaction>
        <text>(R)-pantothenate + ATP = (R)-4'-phosphopantothenate + ADP + H(+)</text>
        <dbReference type="Rhea" id="RHEA:16373"/>
        <dbReference type="ChEBI" id="CHEBI:10986"/>
        <dbReference type="ChEBI" id="CHEBI:15378"/>
        <dbReference type="ChEBI" id="CHEBI:29032"/>
        <dbReference type="ChEBI" id="CHEBI:30616"/>
        <dbReference type="ChEBI" id="CHEBI:456216"/>
        <dbReference type="EC" id="2.7.1.33"/>
    </reaction>
</comment>
<comment type="pathway">
    <text>Cofactor biosynthesis; coenzyme A biosynthesis; CoA from (R)-pantothenate: step 1/5.</text>
</comment>
<comment type="subcellular location">
    <subcellularLocation>
        <location evidence="1">Cytoplasm</location>
    </subcellularLocation>
</comment>
<comment type="similarity">
    <text evidence="3">Belongs to the prokaryotic pantothenate kinase family.</text>
</comment>
<comment type="sequence caution" evidence="3">
    <conflict type="erroneous initiation">
        <sequence resource="EMBL-CDS" id="BAA12625"/>
    </conflict>
</comment>
<sequence>MKNKELNLHTLYTQHNRESWSGFGGHLSIAVSEEEAKAVEGLNDYLSVEEVETIYIPLVRLLHLHVKSAAERNKHVNVFLKHPHSAKIPFIIGIAGSVAVGKSTTARILQKLLSRLPDRPKVSLITTDGFLFPTAELKKKNMMSRKGFPESYDVKALLEFLNDLKSGKDSVKAPVYSHLTYDREEGVFEVVEQADIVIIEGINVLQSPTLEDDRENPRIFVSDFFDFSIYVDAEESRIFTWYLERFRLLRETAFQNPDSYFHKFKDLSDQEADEMAASIWESVNRPNLYENILPTKFRSDLILRKGDGHKVEEVLVRRV</sequence>